<dbReference type="EMBL" id="AABR03084676">
    <property type="status" value="NOT_ANNOTATED_CDS"/>
    <property type="molecule type" value="Genomic_DNA"/>
</dbReference>
<dbReference type="RefSeq" id="NP_001099439.1">
    <property type="nucleotide sequence ID" value="NM_001105969.1"/>
</dbReference>
<dbReference type="RefSeq" id="XP_006250338.1">
    <property type="nucleotide sequence ID" value="XM_006250276.5"/>
</dbReference>
<dbReference type="RefSeq" id="XP_006250339.1">
    <property type="nucleotide sequence ID" value="XM_006250277.5"/>
</dbReference>
<dbReference type="RefSeq" id="XP_017454201.1">
    <property type="nucleotide sequence ID" value="XM_017598712.3"/>
</dbReference>
<dbReference type="RefSeq" id="XP_017454202.1">
    <property type="nucleotide sequence ID" value="XM_017598713.3"/>
</dbReference>
<dbReference type="RefSeq" id="XP_038946440.1">
    <property type="nucleotide sequence ID" value="XM_039090512.2"/>
</dbReference>
<dbReference type="RefSeq" id="XP_038946441.1">
    <property type="nucleotide sequence ID" value="XM_039090513.2"/>
</dbReference>
<dbReference type="RefSeq" id="XP_038946442.1">
    <property type="nucleotide sequence ID" value="XM_039090514.2"/>
</dbReference>
<dbReference type="SMR" id="P84889"/>
<dbReference type="BioGRID" id="252835">
    <property type="interactions" value="4"/>
</dbReference>
<dbReference type="CORUM" id="P84889"/>
<dbReference type="FunCoup" id="P84889">
    <property type="interactions" value="1702"/>
</dbReference>
<dbReference type="IntAct" id="P84889">
    <property type="interactions" value="4"/>
</dbReference>
<dbReference type="MINT" id="P84889"/>
<dbReference type="STRING" id="10116.ENSRNOP00000072619"/>
<dbReference type="iPTMnet" id="P84889"/>
<dbReference type="PhosphoSitePlus" id="P84889"/>
<dbReference type="SwissPalm" id="P84889"/>
<dbReference type="PaxDb" id="10116-ENSRNOP00000006849"/>
<dbReference type="Ensembl" id="ENSRNOT00000006849.6">
    <property type="protein sequence ID" value="ENSRNOP00000006849.5"/>
    <property type="gene ID" value="ENSRNOG00000004889.7"/>
</dbReference>
<dbReference type="GeneID" id="289229"/>
<dbReference type="KEGG" id="rno:289229"/>
<dbReference type="UCSC" id="RGD:1309442">
    <property type="organism name" value="rat"/>
</dbReference>
<dbReference type="AGR" id="RGD:1309442"/>
<dbReference type="CTD" id="57216"/>
<dbReference type="RGD" id="1309442">
    <property type="gene designation" value="Vangl2"/>
</dbReference>
<dbReference type="eggNOG" id="KOG3814">
    <property type="taxonomic scope" value="Eukaryota"/>
</dbReference>
<dbReference type="GeneTree" id="ENSGT00390000012496"/>
<dbReference type="InParanoid" id="P84889"/>
<dbReference type="OMA" id="MWHREND"/>
<dbReference type="OrthoDB" id="80860at9989"/>
<dbReference type="PhylomeDB" id="P84889"/>
<dbReference type="TreeFam" id="TF313467"/>
<dbReference type="Reactome" id="R-RNO-9696264">
    <property type="pathway name" value="RND3 GTPase cycle"/>
</dbReference>
<dbReference type="Reactome" id="R-RNO-9696270">
    <property type="pathway name" value="RND2 GTPase cycle"/>
</dbReference>
<dbReference type="Reactome" id="R-RNO-9696273">
    <property type="pathway name" value="RND1 GTPase cycle"/>
</dbReference>
<dbReference type="PRO" id="PR:P84889"/>
<dbReference type="Proteomes" id="UP000002494">
    <property type="component" value="Chromosome 13"/>
</dbReference>
<dbReference type="Bgee" id="ENSRNOG00000004889">
    <property type="expression patterns" value="Expressed in thymus and 17 other cell types or tissues"/>
</dbReference>
<dbReference type="GO" id="GO:0090651">
    <property type="term" value="C:apical cytoplasm"/>
    <property type="evidence" value="ECO:0000266"/>
    <property type="project" value="RGD"/>
</dbReference>
<dbReference type="GO" id="GO:0016324">
    <property type="term" value="C:apical plasma membrane"/>
    <property type="evidence" value="ECO:0000266"/>
    <property type="project" value="RGD"/>
</dbReference>
<dbReference type="GO" id="GO:0016323">
    <property type="term" value="C:basolateral plasma membrane"/>
    <property type="evidence" value="ECO:0000266"/>
    <property type="project" value="RGD"/>
</dbReference>
<dbReference type="GO" id="GO:0071944">
    <property type="term" value="C:cell periphery"/>
    <property type="evidence" value="ECO:0000266"/>
    <property type="project" value="RGD"/>
</dbReference>
<dbReference type="GO" id="GO:0060187">
    <property type="term" value="C:cell pole"/>
    <property type="evidence" value="ECO:0000266"/>
    <property type="project" value="RGD"/>
</dbReference>
<dbReference type="GO" id="GO:0005911">
    <property type="term" value="C:cell-cell junction"/>
    <property type="evidence" value="ECO:0000266"/>
    <property type="project" value="RGD"/>
</dbReference>
<dbReference type="GO" id="GO:0030134">
    <property type="term" value="C:COPII-coated ER to Golgi transport vesicle"/>
    <property type="evidence" value="ECO:0000266"/>
    <property type="project" value="RGD"/>
</dbReference>
<dbReference type="GO" id="GO:0098978">
    <property type="term" value="C:glutamatergic synapse"/>
    <property type="evidence" value="ECO:0000314"/>
    <property type="project" value="SynGO"/>
</dbReference>
<dbReference type="GO" id="GO:0016328">
    <property type="term" value="C:lateral plasma membrane"/>
    <property type="evidence" value="ECO:0000266"/>
    <property type="project" value="RGD"/>
</dbReference>
<dbReference type="GO" id="GO:0005886">
    <property type="term" value="C:plasma membrane"/>
    <property type="evidence" value="ECO:0000266"/>
    <property type="project" value="RGD"/>
</dbReference>
<dbReference type="GO" id="GO:0098839">
    <property type="term" value="C:postsynaptic density membrane"/>
    <property type="evidence" value="ECO:0000314"/>
    <property type="project" value="SynGO"/>
</dbReference>
<dbReference type="GO" id="GO:0001725">
    <property type="term" value="C:stress fiber"/>
    <property type="evidence" value="ECO:0000266"/>
    <property type="project" value="RGD"/>
</dbReference>
<dbReference type="GO" id="GO:0009952">
    <property type="term" value="P:anterior/posterior pattern specification"/>
    <property type="evidence" value="ECO:0000266"/>
    <property type="project" value="RGD"/>
</dbReference>
<dbReference type="GO" id="GO:0045176">
    <property type="term" value="P:apical protein localization"/>
    <property type="evidence" value="ECO:0000266"/>
    <property type="project" value="RGD"/>
</dbReference>
<dbReference type="GO" id="GO:0035787">
    <property type="term" value="P:cell migration involved in kidney development"/>
    <property type="evidence" value="ECO:0000266"/>
    <property type="project" value="RGD"/>
</dbReference>
<dbReference type="GO" id="GO:0090102">
    <property type="term" value="P:cochlea development"/>
    <property type="evidence" value="ECO:0000266"/>
    <property type="project" value="RGD"/>
</dbReference>
<dbReference type="GO" id="GO:0090103">
    <property type="term" value="P:cochlea morphogenesis"/>
    <property type="evidence" value="ECO:0000266"/>
    <property type="project" value="RGD"/>
</dbReference>
<dbReference type="GO" id="GO:0060028">
    <property type="term" value="P:convergent extension involved in axis elongation"/>
    <property type="evidence" value="ECO:0000266"/>
    <property type="project" value="RGD"/>
</dbReference>
<dbReference type="GO" id="GO:0022007">
    <property type="term" value="P:convergent extension involved in neural plate elongation"/>
    <property type="evidence" value="ECO:0000266"/>
    <property type="project" value="RGD"/>
</dbReference>
<dbReference type="GO" id="GO:0060029">
    <property type="term" value="P:convergent extension involved in organogenesis"/>
    <property type="evidence" value="ECO:0000266"/>
    <property type="project" value="RGD"/>
</dbReference>
<dbReference type="GO" id="GO:0048546">
    <property type="term" value="P:digestive tract morphogenesis"/>
    <property type="evidence" value="ECO:0000266"/>
    <property type="project" value="RGD"/>
</dbReference>
<dbReference type="GO" id="GO:0036514">
    <property type="term" value="P:dopaminergic neuron axon guidance"/>
    <property type="evidence" value="ECO:0000266"/>
    <property type="project" value="RGD"/>
</dbReference>
<dbReference type="GO" id="GO:0048105">
    <property type="term" value="P:establishment of body hair planar orientation"/>
    <property type="evidence" value="ECO:0000266"/>
    <property type="project" value="RGD"/>
</dbReference>
<dbReference type="GO" id="GO:0001736">
    <property type="term" value="P:establishment of planar polarity"/>
    <property type="evidence" value="ECO:0000266"/>
    <property type="project" value="RGD"/>
</dbReference>
<dbReference type="GO" id="GO:0090177">
    <property type="term" value="P:establishment of planar polarity involved in neural tube closure"/>
    <property type="evidence" value="ECO:0000266"/>
    <property type="project" value="RGD"/>
</dbReference>
<dbReference type="GO" id="GO:0045197">
    <property type="term" value="P:establishment or maintenance of epithelial cell apical/basal polarity"/>
    <property type="evidence" value="ECO:0000266"/>
    <property type="project" value="RGD"/>
</dbReference>
<dbReference type="GO" id="GO:0032835">
    <property type="term" value="P:glomerulus development"/>
    <property type="evidence" value="ECO:0000266"/>
    <property type="project" value="RGD"/>
</dbReference>
<dbReference type="GO" id="GO:0001942">
    <property type="term" value="P:hair follicle development"/>
    <property type="evidence" value="ECO:0000266"/>
    <property type="project" value="RGD"/>
</dbReference>
<dbReference type="GO" id="GO:0001947">
    <property type="term" value="P:heart looping"/>
    <property type="evidence" value="ECO:0000266"/>
    <property type="project" value="RGD"/>
</dbReference>
<dbReference type="GO" id="GO:0015012">
    <property type="term" value="P:heparan sulfate proteoglycan biosynthetic process"/>
    <property type="evidence" value="ECO:0000266"/>
    <property type="project" value="RGD"/>
</dbReference>
<dbReference type="GO" id="GO:0060119">
    <property type="term" value="P:inner ear receptor cell development"/>
    <property type="evidence" value="ECO:0000266"/>
    <property type="project" value="RGD"/>
</dbReference>
<dbReference type="GO" id="GO:0060122">
    <property type="term" value="P:inner ear receptor cell stereocilium organization"/>
    <property type="evidence" value="ECO:0000266"/>
    <property type="project" value="RGD"/>
</dbReference>
<dbReference type="GO" id="GO:0060993">
    <property type="term" value="P:kidney morphogenesis"/>
    <property type="evidence" value="ECO:0000266"/>
    <property type="project" value="RGD"/>
</dbReference>
<dbReference type="GO" id="GO:0060490">
    <property type="term" value="P:lateral sprouting involved in lung morphogenesis"/>
    <property type="evidence" value="ECO:0000266"/>
    <property type="project" value="RGD"/>
</dbReference>
<dbReference type="GO" id="GO:0003149">
    <property type="term" value="P:membranous septum morphogenesis"/>
    <property type="evidence" value="ECO:0000266"/>
    <property type="project" value="RGD"/>
</dbReference>
<dbReference type="GO" id="GO:0003150">
    <property type="term" value="P:muscular septum morphogenesis"/>
    <property type="evidence" value="ECO:0000266"/>
    <property type="project" value="RGD"/>
</dbReference>
<dbReference type="GO" id="GO:0001843">
    <property type="term" value="P:neural tube closure"/>
    <property type="evidence" value="ECO:0000266"/>
    <property type="project" value="RGD"/>
</dbReference>
<dbReference type="GO" id="GO:0035567">
    <property type="term" value="P:non-canonical Wnt signaling pathway"/>
    <property type="evidence" value="ECO:0000266"/>
    <property type="project" value="RGD"/>
</dbReference>
<dbReference type="GO" id="GO:1905515">
    <property type="term" value="P:non-motile cilium assembly"/>
    <property type="evidence" value="ECO:0000266"/>
    <property type="project" value="RGD"/>
</dbReference>
<dbReference type="GO" id="GO:0060488">
    <property type="term" value="P:orthogonal dichotomous subdivision of terminal units involved in lung branching morphogenesis"/>
    <property type="evidence" value="ECO:0000266"/>
    <property type="project" value="RGD"/>
</dbReference>
<dbReference type="GO" id="GO:0060489">
    <property type="term" value="P:planar dichotomous subdivision of terminal units involved in lung branching morphogenesis"/>
    <property type="evidence" value="ECO:0000266"/>
    <property type="project" value="RGD"/>
</dbReference>
<dbReference type="GO" id="GO:0036342">
    <property type="term" value="P:post-anal tail morphogenesis"/>
    <property type="evidence" value="ECO:0000266"/>
    <property type="project" value="RGD"/>
</dbReference>
<dbReference type="GO" id="GO:0032956">
    <property type="term" value="P:regulation of actin cytoskeleton organization"/>
    <property type="evidence" value="ECO:0000266"/>
    <property type="project" value="RGD"/>
</dbReference>
<dbReference type="GO" id="GO:0090175">
    <property type="term" value="P:regulation of establishment of planar polarity"/>
    <property type="evidence" value="ECO:0000266"/>
    <property type="project" value="RGD"/>
</dbReference>
<dbReference type="GO" id="GO:1905806">
    <property type="term" value="P:regulation of synapse pruning"/>
    <property type="evidence" value="ECO:0000266"/>
    <property type="project" value="RGD"/>
</dbReference>
<dbReference type="GO" id="GO:0030111">
    <property type="term" value="P:regulation of Wnt signaling pathway"/>
    <property type="evidence" value="ECO:0000266"/>
    <property type="project" value="RGD"/>
</dbReference>
<dbReference type="GO" id="GO:0007266">
    <property type="term" value="P:Rho protein signal transduction"/>
    <property type="evidence" value="ECO:0000266"/>
    <property type="project" value="RGD"/>
</dbReference>
<dbReference type="GO" id="GO:0036515">
    <property type="term" value="P:serotonergic neuron axon guidance"/>
    <property type="evidence" value="ECO:0000266"/>
    <property type="project" value="RGD"/>
</dbReference>
<dbReference type="GO" id="GO:0048103">
    <property type="term" value="P:somatic stem cell division"/>
    <property type="evidence" value="ECO:0000266"/>
    <property type="project" value="RGD"/>
</dbReference>
<dbReference type="GO" id="GO:0035019">
    <property type="term" value="P:somatic stem cell population maintenance"/>
    <property type="evidence" value="ECO:0000266"/>
    <property type="project" value="RGD"/>
</dbReference>
<dbReference type="GO" id="GO:0060071">
    <property type="term" value="P:Wnt signaling pathway, planar cell polarity pathway"/>
    <property type="evidence" value="ECO:0000266"/>
    <property type="project" value="RGD"/>
</dbReference>
<dbReference type="GO" id="GO:0042060">
    <property type="term" value="P:wound healing"/>
    <property type="evidence" value="ECO:0000266"/>
    <property type="project" value="RGD"/>
</dbReference>
<dbReference type="InterPro" id="IPR009539">
    <property type="entry name" value="VANGL"/>
</dbReference>
<dbReference type="PANTHER" id="PTHR20886">
    <property type="entry name" value="VANG-LIKE PROTEIN"/>
    <property type="match status" value="1"/>
</dbReference>
<dbReference type="Pfam" id="PF06638">
    <property type="entry name" value="Strabismus"/>
    <property type="match status" value="1"/>
</dbReference>
<dbReference type="PIRSF" id="PIRSF007991">
    <property type="entry name" value="Strabismus"/>
    <property type="match status" value="1"/>
</dbReference>
<name>VANG2_RAT</name>
<feature type="chain" id="PRO_0000247591" description="Vang-like protein 2">
    <location>
        <begin position="1"/>
        <end position="521"/>
    </location>
</feature>
<feature type="topological domain" description="Cytoplasmic" evidence="3">
    <location>
        <begin position="1"/>
        <end position="108"/>
    </location>
</feature>
<feature type="transmembrane region" description="Helical; Name=1" evidence="3">
    <location>
        <begin position="109"/>
        <end position="129"/>
    </location>
</feature>
<feature type="topological domain" description="Extracellular" evidence="3">
    <location>
        <begin position="130"/>
        <end position="147"/>
    </location>
</feature>
<feature type="transmembrane region" description="Helical; Name=2" evidence="3">
    <location>
        <begin position="148"/>
        <end position="168"/>
    </location>
</feature>
<feature type="topological domain" description="Cytoplasmic" evidence="3">
    <location>
        <begin position="169"/>
        <end position="178"/>
    </location>
</feature>
<feature type="transmembrane region" description="Helical; Name=3" evidence="3">
    <location>
        <begin position="179"/>
        <end position="199"/>
    </location>
</feature>
<feature type="topological domain" description="Extracellular" evidence="3">
    <location>
        <begin position="200"/>
        <end position="217"/>
    </location>
</feature>
<feature type="transmembrane region" description="Helical; Name=4" evidence="3">
    <location>
        <begin position="218"/>
        <end position="238"/>
    </location>
</feature>
<feature type="topological domain" description="Cytoplasmic" evidence="3">
    <location>
        <begin position="239"/>
        <end position="521"/>
    </location>
</feature>
<feature type="region of interest" description="Disordered" evidence="4">
    <location>
        <begin position="1"/>
        <end position="81"/>
    </location>
</feature>
<feature type="compositionally biased region" description="Basic residues" evidence="4">
    <location>
        <begin position="15"/>
        <end position="33"/>
    </location>
</feature>
<feature type="compositionally biased region" description="Basic and acidic residues" evidence="4">
    <location>
        <begin position="57"/>
        <end position="67"/>
    </location>
</feature>
<feature type="compositionally biased region" description="Low complexity" evidence="4">
    <location>
        <begin position="69"/>
        <end position="81"/>
    </location>
</feature>
<sequence>MDTESQYSGYSYKSGHSRSSRKHRDRRDRHRSKSRDGSRGDKSVTIQAPGEPLLDNESTRGDERDDNWGETTTVVTGTSEHSISHDDLTRIAKDMEDSVPLDCSRHLGVAAGAILALLSFLTPLAFLLLPPLLWREELEPCGTACEGLFISVAFKLLILLLGSWALFFRRPKASLPRVFVLRALLMVLVFLLVISYWLFYGVRILDARERSYQGVVQFAVSLVDALLFVHYLAVVLLELRQLQPQFTLKVVRSTDGASRFYNVGHLSIQRVAVWILEKYYHDFPVYNPALLNLPKSVLAKKVSGFKVYSLGEENSTNNSTGQSRAVIAAAARRRDNSHNEYYYEEAEHERRVRKRRARLVVAVEEAFTHIKRLQEEEQKNPREVMDPREAAQAIFASMARAMQKYLRTTKQQPYHTMESILQHLEFCITHDMTPKAFLERYLAAGPTIQYHKERWLAKQWTLVSEEPVTNGLKDGIVFLLKRQDFSLVVSTKKVPFFKLSEEFVDPKSHKFVMRLQSETSV</sequence>
<evidence type="ECO:0000250" key="1"/>
<evidence type="ECO:0000250" key="2">
    <source>
        <dbReference type="UniProtKB" id="Q91ZD4"/>
    </source>
</evidence>
<evidence type="ECO:0000255" key="3"/>
<evidence type="ECO:0000256" key="4">
    <source>
        <dbReference type="SAM" id="MobiDB-lite"/>
    </source>
</evidence>
<evidence type="ECO:0000269" key="5">
    <source>
    </source>
</evidence>
<evidence type="ECO:0000269" key="6">
    <source>
    </source>
</evidence>
<evidence type="ECO:0000305" key="7"/>
<evidence type="ECO:0000312" key="8">
    <source>
        <dbReference type="RGD" id="1309442"/>
    </source>
</evidence>
<reference evidence="7" key="1">
    <citation type="journal article" date="2004" name="Nature">
        <title>Genome sequence of the Brown Norway rat yields insights into mammalian evolution.</title>
        <authorList>
            <person name="Gibbs R.A."/>
            <person name="Weinstock G.M."/>
            <person name="Metzker M.L."/>
            <person name="Muzny D.M."/>
            <person name="Sodergren E.J."/>
            <person name="Scherer S."/>
            <person name="Scott G."/>
            <person name="Steffen D."/>
            <person name="Worley K.C."/>
            <person name="Burch P.E."/>
            <person name="Okwuonu G."/>
            <person name="Hines S."/>
            <person name="Lewis L."/>
            <person name="Deramo C."/>
            <person name="Delgado O."/>
            <person name="Dugan-Rocha S."/>
            <person name="Miner G."/>
            <person name="Morgan M."/>
            <person name="Hawes A."/>
            <person name="Gill R."/>
            <person name="Holt R.A."/>
            <person name="Adams M.D."/>
            <person name="Amanatides P.G."/>
            <person name="Baden-Tillson H."/>
            <person name="Barnstead M."/>
            <person name="Chin S."/>
            <person name="Evans C.A."/>
            <person name="Ferriera S."/>
            <person name="Fosler C."/>
            <person name="Glodek A."/>
            <person name="Gu Z."/>
            <person name="Jennings D."/>
            <person name="Kraft C.L."/>
            <person name="Nguyen T."/>
            <person name="Pfannkoch C.M."/>
            <person name="Sitter C."/>
            <person name="Sutton G.G."/>
            <person name="Venter J.C."/>
            <person name="Woodage T."/>
            <person name="Smith D."/>
            <person name="Lee H.-M."/>
            <person name="Gustafson E."/>
            <person name="Cahill P."/>
            <person name="Kana A."/>
            <person name="Doucette-Stamm L."/>
            <person name="Weinstock K."/>
            <person name="Fechtel K."/>
            <person name="Weiss R.B."/>
            <person name="Dunn D.M."/>
            <person name="Green E.D."/>
            <person name="Blakesley R.W."/>
            <person name="Bouffard G.G."/>
            <person name="De Jong P.J."/>
            <person name="Osoegawa K."/>
            <person name="Zhu B."/>
            <person name="Marra M."/>
            <person name="Schein J."/>
            <person name="Bosdet I."/>
            <person name="Fjell C."/>
            <person name="Jones S."/>
            <person name="Krzywinski M."/>
            <person name="Mathewson C."/>
            <person name="Siddiqui A."/>
            <person name="Wye N."/>
            <person name="McPherson J."/>
            <person name="Zhao S."/>
            <person name="Fraser C.M."/>
            <person name="Shetty J."/>
            <person name="Shatsman S."/>
            <person name="Geer K."/>
            <person name="Chen Y."/>
            <person name="Abramzon S."/>
            <person name="Nierman W.C."/>
            <person name="Havlak P.H."/>
            <person name="Chen R."/>
            <person name="Durbin K.J."/>
            <person name="Egan A."/>
            <person name="Ren Y."/>
            <person name="Song X.-Z."/>
            <person name="Li B."/>
            <person name="Liu Y."/>
            <person name="Qin X."/>
            <person name="Cawley S."/>
            <person name="Cooney A.J."/>
            <person name="D'Souza L.M."/>
            <person name="Martin K."/>
            <person name="Wu J.Q."/>
            <person name="Gonzalez-Garay M.L."/>
            <person name="Jackson A.R."/>
            <person name="Kalafus K.J."/>
            <person name="McLeod M.P."/>
            <person name="Milosavljevic A."/>
            <person name="Virk D."/>
            <person name="Volkov A."/>
            <person name="Wheeler D.A."/>
            <person name="Zhang Z."/>
            <person name="Bailey J.A."/>
            <person name="Eichler E.E."/>
            <person name="Tuzun E."/>
            <person name="Birney E."/>
            <person name="Mongin E."/>
            <person name="Ureta-Vidal A."/>
            <person name="Woodwark C."/>
            <person name="Zdobnov E."/>
            <person name="Bork P."/>
            <person name="Suyama M."/>
            <person name="Torrents D."/>
            <person name="Alexandersson M."/>
            <person name="Trask B.J."/>
            <person name="Young J.M."/>
            <person name="Huang H."/>
            <person name="Wang H."/>
            <person name="Xing H."/>
            <person name="Daniels S."/>
            <person name="Gietzen D."/>
            <person name="Schmidt J."/>
            <person name="Stevens K."/>
            <person name="Vitt U."/>
            <person name="Wingrove J."/>
            <person name="Camara F."/>
            <person name="Mar Alba M."/>
            <person name="Abril J.F."/>
            <person name="Guigo R."/>
            <person name="Smit A."/>
            <person name="Dubchak I."/>
            <person name="Rubin E.M."/>
            <person name="Couronne O."/>
            <person name="Poliakov A."/>
            <person name="Huebner N."/>
            <person name="Ganten D."/>
            <person name="Goesele C."/>
            <person name="Hummel O."/>
            <person name="Kreitler T."/>
            <person name="Lee Y.-A."/>
            <person name="Monti J."/>
            <person name="Schulz H."/>
            <person name="Zimdahl H."/>
            <person name="Himmelbauer H."/>
            <person name="Lehrach H."/>
            <person name="Jacob H.J."/>
            <person name="Bromberg S."/>
            <person name="Gullings-Handley J."/>
            <person name="Jensen-Seaman M.I."/>
            <person name="Kwitek A.E."/>
            <person name="Lazar J."/>
            <person name="Pasko D."/>
            <person name="Tonellato P.J."/>
            <person name="Twigger S."/>
            <person name="Ponting C.P."/>
            <person name="Duarte J.M."/>
            <person name="Rice S."/>
            <person name="Goodstadt L."/>
            <person name="Beatson S.A."/>
            <person name="Emes R.D."/>
            <person name="Winter E.E."/>
            <person name="Webber C."/>
            <person name="Brandt P."/>
            <person name="Nyakatura G."/>
            <person name="Adetobi M."/>
            <person name="Chiaromonte F."/>
            <person name="Elnitski L."/>
            <person name="Eswara P."/>
            <person name="Hardison R.C."/>
            <person name="Hou M."/>
            <person name="Kolbe D."/>
            <person name="Makova K."/>
            <person name="Miller W."/>
            <person name="Nekrutenko A."/>
            <person name="Riemer C."/>
            <person name="Schwartz S."/>
            <person name="Taylor J."/>
            <person name="Yang S."/>
            <person name="Zhang Y."/>
            <person name="Lindpaintner K."/>
            <person name="Andrews T.D."/>
            <person name="Caccamo M."/>
            <person name="Clamp M."/>
            <person name="Clarke L."/>
            <person name="Curwen V."/>
            <person name="Durbin R.M."/>
            <person name="Eyras E."/>
            <person name="Searle S.M."/>
            <person name="Cooper G.M."/>
            <person name="Batzoglou S."/>
            <person name="Brudno M."/>
            <person name="Sidow A."/>
            <person name="Stone E.A."/>
            <person name="Payseur B.A."/>
            <person name="Bourque G."/>
            <person name="Lopez-Otin C."/>
            <person name="Puente X.S."/>
            <person name="Chakrabarti K."/>
            <person name="Chatterji S."/>
            <person name="Dewey C."/>
            <person name="Pachter L."/>
            <person name="Bray N."/>
            <person name="Yap V.B."/>
            <person name="Caspi A."/>
            <person name="Tesler G."/>
            <person name="Pevzner P.A."/>
            <person name="Haussler D."/>
            <person name="Roskin K.M."/>
            <person name="Baertsch R."/>
            <person name="Clawson H."/>
            <person name="Furey T.S."/>
            <person name="Hinrichs A.S."/>
            <person name="Karolchik D."/>
            <person name="Kent W.J."/>
            <person name="Rosenbloom K.R."/>
            <person name="Trumbower H."/>
            <person name="Weirauch M."/>
            <person name="Cooper D.N."/>
            <person name="Stenson P.D."/>
            <person name="Ma B."/>
            <person name="Brent M."/>
            <person name="Arumugam M."/>
            <person name="Shteynberg D."/>
            <person name="Copley R.R."/>
            <person name="Taylor M.S."/>
            <person name="Riethman H."/>
            <person name="Mudunuri U."/>
            <person name="Peterson J."/>
            <person name="Guyer M."/>
            <person name="Felsenfeld A."/>
            <person name="Old S."/>
            <person name="Mockrin S."/>
            <person name="Collins F.S."/>
        </authorList>
    </citation>
    <scope>NUCLEOTIDE SEQUENCE [LARGE SCALE GENOMIC DNA]</scope>
    <source>
        <strain evidence="5">Brown Norway</strain>
    </source>
</reference>
<reference evidence="7" key="2">
    <citation type="journal article" date="2006" name="J. Neurosci.">
        <title>Asymmetric localization of Vangl2 and Fz3 indicate novel mechanisms for planar cell polarity in mammals.</title>
        <authorList>
            <person name="Montcouquiol M."/>
            <person name="Sans N."/>
            <person name="Huss D."/>
            <person name="Kach J."/>
            <person name="Dickman J.D."/>
            <person name="Forge A."/>
            <person name="Rachel R.A."/>
            <person name="Copeland N.G."/>
            <person name="Jenkins N.A."/>
            <person name="Bogani D."/>
            <person name="Murdoch J."/>
            <person name="Warchol M.E."/>
            <person name="Wenthold R.J."/>
            <person name="Kelley M.W."/>
        </authorList>
    </citation>
    <scope>TISSUE SPECIFICITY</scope>
    <scope>DEVELOPMENTAL STAGE</scope>
</reference>
<keyword id="KW-1003">Cell membrane</keyword>
<keyword id="KW-0217">Developmental protein</keyword>
<keyword id="KW-0472">Membrane</keyword>
<keyword id="KW-1185">Reference proteome</keyword>
<keyword id="KW-0812">Transmembrane</keyword>
<keyword id="KW-1133">Transmembrane helix</keyword>
<comment type="function">
    <text evidence="2">Involved in the control of early morphogenesis and patterning of both axial midline structures and the development of neural plate. Plays a role in the regulation of planar cell polarity, particularly in the orientation of stereociliary bundles in the cochlea. Required for polarization and movement of myocardializing cells in the outflow tract and seems to act via RHOA signaling to regulate this process. Required for cell surface localization of FZD3 and FZD6 in the inner ear (By similarity).</text>
</comment>
<comment type="subunit">
    <text evidence="1">Homodimer and heterodimer with VANGL1. Interacts through its C-terminal region with the N-terminal half of DVL1, DVL2 and DVL3. The PDZ domain of DVL1, DVL2 and DVL3 is required for the interaction. Also interacts with the PDZ domains of MAGI3, SCRIB/SCRB1 and FZD3 (By similarity).</text>
</comment>
<comment type="subcellular location">
    <subcellularLocation>
        <location evidence="1">Cell membrane</location>
        <topology evidence="1">Multi-pass membrane protein</topology>
    </subcellularLocation>
</comment>
<comment type="tissue specificity">
    <text evidence="6">Asymmetrically localized to specific cell-cell boundaries in the developing inner ear.</text>
</comment>
<comment type="developmental stage">
    <text evidence="6">Expression does not persist beyond the early postnatal period in the sensory region of the inner ear.</text>
</comment>
<comment type="similarity">
    <text evidence="3">Belongs to the Vang family.</text>
</comment>
<accession>P84889</accession>
<proteinExistence type="evidence at transcript level"/>
<gene>
    <name evidence="8" type="primary">Vangl2</name>
</gene>
<protein>
    <recommendedName>
        <fullName>Vang-like protein 2</fullName>
    </recommendedName>
    <alternativeName>
        <fullName>Van Gogh-like protein 2</fullName>
    </alternativeName>
</protein>
<organism>
    <name type="scientific">Rattus norvegicus</name>
    <name type="common">Rat</name>
    <dbReference type="NCBI Taxonomy" id="10116"/>
    <lineage>
        <taxon>Eukaryota</taxon>
        <taxon>Metazoa</taxon>
        <taxon>Chordata</taxon>
        <taxon>Craniata</taxon>
        <taxon>Vertebrata</taxon>
        <taxon>Euteleostomi</taxon>
        <taxon>Mammalia</taxon>
        <taxon>Eutheria</taxon>
        <taxon>Euarchontoglires</taxon>
        <taxon>Glires</taxon>
        <taxon>Rodentia</taxon>
        <taxon>Myomorpha</taxon>
        <taxon>Muroidea</taxon>
        <taxon>Muridae</taxon>
        <taxon>Murinae</taxon>
        <taxon>Rattus</taxon>
    </lineage>
</organism>